<sequence length="508" mass="56426">MSWHVQNENFILDSTRIFMKAFHLLLFDGSLIFPECILIFGLILLLMIDSTSDQKERPWLYFISSTSLVMSITALLFRWREEPMISFSGNFQTNNFNEIFQFLILLCSTLCIPLSVEYIECTEMAITEFLLFVLTATLGGMFLCGANDFITIFVAPECFSLCSYLLSGYTKKDVRSNEATMKYLLMGGASSSILVHGFSWLYGLSGGEIELQEIVNGLINTQMYNSPGISIALIFITVGIGFKLSPAPSHQWTPDVYEGSPTPVVAFLSVTSKVAASASATRIFDIPFYFSSNEWHLLLEILAILSMILGNLIAITQTSMKRMLAYSSIGQIGYVIIGIIVGDSNDGYASMITYMLFYISMNLGAFACIVLFGLRTGTDNIRDYAGLYTKDPFLALSLALCLLSLGGLPPLAGFFGKLYLFWCGWQAGLYFLVFIGLLTSVVSIYYYLKIIKLLMTGRNQAITPHVRNYRRSPSNNSIELSMIVCVIASTIPGISMNPIIAIAQDTLF</sequence>
<geneLocation type="chloroplast"/>
<name>NU2C2_IPOPU</name>
<reference key="1">
    <citation type="journal article" date="2007" name="BMC Plant Biol.">
        <title>Complete plastid genome sequences suggest strong selection for retention of photosynthetic genes in the parasitic plant genus Cuscuta.</title>
        <authorList>
            <person name="McNeal J.R."/>
            <person name="Kuehl J.V."/>
            <person name="Boore J.L."/>
            <person name="dePamphilis C.W."/>
        </authorList>
    </citation>
    <scope>NUCLEOTIDE SEQUENCE [LARGE SCALE GENOMIC DNA]</scope>
</reference>
<feature type="chain" id="PRO_0000391276" description="NAD(P)H-quinone oxidoreductase subunit 2 B, chloroplastic">
    <location>
        <begin position="1"/>
        <end position="508"/>
    </location>
</feature>
<feature type="transmembrane region" description="Helical" evidence="1">
    <location>
        <begin position="24"/>
        <end position="44"/>
    </location>
</feature>
<feature type="transmembrane region" description="Helical" evidence="1">
    <location>
        <begin position="59"/>
        <end position="79"/>
    </location>
</feature>
<feature type="transmembrane region" description="Helical" evidence="1">
    <location>
        <begin position="99"/>
        <end position="119"/>
    </location>
</feature>
<feature type="transmembrane region" description="Helical" evidence="1">
    <location>
        <begin position="124"/>
        <end position="144"/>
    </location>
</feature>
<feature type="transmembrane region" description="Helical" evidence="1">
    <location>
        <begin position="149"/>
        <end position="169"/>
    </location>
</feature>
<feature type="transmembrane region" description="Helical" evidence="1">
    <location>
        <begin position="184"/>
        <end position="204"/>
    </location>
</feature>
<feature type="transmembrane region" description="Helical" evidence="1">
    <location>
        <begin position="227"/>
        <end position="247"/>
    </location>
</feature>
<feature type="transmembrane region" description="Helical" evidence="1">
    <location>
        <begin position="295"/>
        <end position="315"/>
    </location>
</feature>
<feature type="transmembrane region" description="Helical" evidence="1">
    <location>
        <begin position="323"/>
        <end position="343"/>
    </location>
</feature>
<feature type="transmembrane region" description="Helical" evidence="1">
    <location>
        <begin position="354"/>
        <end position="374"/>
    </location>
</feature>
<feature type="transmembrane region" description="Helical" evidence="1">
    <location>
        <begin position="395"/>
        <end position="415"/>
    </location>
</feature>
<feature type="transmembrane region" description="Helical" evidence="1">
    <location>
        <begin position="418"/>
        <end position="438"/>
    </location>
</feature>
<feature type="transmembrane region" description="Helical" evidence="1">
    <location>
        <begin position="482"/>
        <end position="502"/>
    </location>
</feature>
<accession>P0CC77</accession>
<accession>A7Y3J8</accession>
<protein>
    <recommendedName>
        <fullName evidence="1">NAD(P)H-quinone oxidoreductase subunit 2 B, chloroplastic</fullName>
        <ecNumber evidence="1">7.1.1.-</ecNumber>
    </recommendedName>
    <alternativeName>
        <fullName evidence="1">NAD(P)H dehydrogenase, subunit 2 B</fullName>
    </alternativeName>
    <alternativeName>
        <fullName evidence="1">NADH-plastoquinone oxidoreductase subunit 2 B</fullName>
    </alternativeName>
</protein>
<evidence type="ECO:0000255" key="1">
    <source>
        <dbReference type="HAMAP-Rule" id="MF_00445"/>
    </source>
</evidence>
<comment type="function">
    <text evidence="1">NDH shuttles electrons from NAD(P)H:plastoquinone, via FMN and iron-sulfur (Fe-S) centers, to quinones in the photosynthetic chain and possibly in a chloroplast respiratory chain. The immediate electron acceptor for the enzyme in this species is believed to be plastoquinone. Couples the redox reaction to proton translocation, and thus conserves the redox energy in a proton gradient.</text>
</comment>
<comment type="catalytic activity">
    <reaction evidence="1">
        <text>a plastoquinone + NADH + (n+1) H(+)(in) = a plastoquinol + NAD(+) + n H(+)(out)</text>
        <dbReference type="Rhea" id="RHEA:42608"/>
        <dbReference type="Rhea" id="RHEA-COMP:9561"/>
        <dbReference type="Rhea" id="RHEA-COMP:9562"/>
        <dbReference type="ChEBI" id="CHEBI:15378"/>
        <dbReference type="ChEBI" id="CHEBI:17757"/>
        <dbReference type="ChEBI" id="CHEBI:57540"/>
        <dbReference type="ChEBI" id="CHEBI:57945"/>
        <dbReference type="ChEBI" id="CHEBI:62192"/>
    </reaction>
</comment>
<comment type="catalytic activity">
    <reaction evidence="1">
        <text>a plastoquinone + NADPH + (n+1) H(+)(in) = a plastoquinol + NADP(+) + n H(+)(out)</text>
        <dbReference type="Rhea" id="RHEA:42612"/>
        <dbReference type="Rhea" id="RHEA-COMP:9561"/>
        <dbReference type="Rhea" id="RHEA-COMP:9562"/>
        <dbReference type="ChEBI" id="CHEBI:15378"/>
        <dbReference type="ChEBI" id="CHEBI:17757"/>
        <dbReference type="ChEBI" id="CHEBI:57783"/>
        <dbReference type="ChEBI" id="CHEBI:58349"/>
        <dbReference type="ChEBI" id="CHEBI:62192"/>
    </reaction>
</comment>
<comment type="subunit">
    <text evidence="1">NDH is composed of at least 16 different subunits, 5 of which are encoded in the nucleus.</text>
</comment>
<comment type="subcellular location">
    <subcellularLocation>
        <location evidence="1">Plastid</location>
        <location evidence="1">Chloroplast thylakoid membrane</location>
        <topology evidence="1">Multi-pass membrane protein</topology>
    </subcellularLocation>
</comment>
<comment type="similarity">
    <text evidence="1">Belongs to the complex I subunit 2 family.</text>
</comment>
<dbReference type="EC" id="7.1.1.-" evidence="1"/>
<dbReference type="EMBL" id="EU118126">
    <property type="protein sequence ID" value="ABV02413.1"/>
    <property type="molecule type" value="Genomic_DNA"/>
</dbReference>
<dbReference type="SMR" id="P0CC77"/>
<dbReference type="GO" id="GO:0009535">
    <property type="term" value="C:chloroplast thylakoid membrane"/>
    <property type="evidence" value="ECO:0007669"/>
    <property type="project" value="UniProtKB-SubCell"/>
</dbReference>
<dbReference type="GO" id="GO:0008137">
    <property type="term" value="F:NADH dehydrogenase (ubiquinone) activity"/>
    <property type="evidence" value="ECO:0007669"/>
    <property type="project" value="InterPro"/>
</dbReference>
<dbReference type="GO" id="GO:0048038">
    <property type="term" value="F:quinone binding"/>
    <property type="evidence" value="ECO:0007669"/>
    <property type="project" value="UniProtKB-KW"/>
</dbReference>
<dbReference type="GO" id="GO:0042773">
    <property type="term" value="P:ATP synthesis coupled electron transport"/>
    <property type="evidence" value="ECO:0007669"/>
    <property type="project" value="InterPro"/>
</dbReference>
<dbReference type="GO" id="GO:0019684">
    <property type="term" value="P:photosynthesis, light reaction"/>
    <property type="evidence" value="ECO:0007669"/>
    <property type="project" value="UniProtKB-UniRule"/>
</dbReference>
<dbReference type="HAMAP" id="MF_00445">
    <property type="entry name" value="NDH1_NuoN_1"/>
    <property type="match status" value="1"/>
</dbReference>
<dbReference type="InterPro" id="IPR010096">
    <property type="entry name" value="NADH-Q_OxRdtase_suN/2"/>
</dbReference>
<dbReference type="InterPro" id="IPR001750">
    <property type="entry name" value="ND/Mrp_TM"/>
</dbReference>
<dbReference type="InterPro" id="IPR045693">
    <property type="entry name" value="Ndh2_N"/>
</dbReference>
<dbReference type="NCBIfam" id="TIGR01770">
    <property type="entry name" value="NDH_I_N"/>
    <property type="match status" value="1"/>
</dbReference>
<dbReference type="NCBIfam" id="NF002701">
    <property type="entry name" value="PRK02504.1"/>
    <property type="match status" value="1"/>
</dbReference>
<dbReference type="PANTHER" id="PTHR22773">
    <property type="entry name" value="NADH DEHYDROGENASE"/>
    <property type="match status" value="1"/>
</dbReference>
<dbReference type="Pfam" id="PF19530">
    <property type="entry name" value="Ndh2_N"/>
    <property type="match status" value="1"/>
</dbReference>
<dbReference type="Pfam" id="PF00361">
    <property type="entry name" value="Proton_antipo_M"/>
    <property type="match status" value="1"/>
</dbReference>
<dbReference type="PRINTS" id="PR01434">
    <property type="entry name" value="NADHDHGNASE5"/>
</dbReference>
<proteinExistence type="inferred from homology"/>
<gene>
    <name evidence="1" type="primary">ndhB2</name>
</gene>
<organism>
    <name type="scientific">Ipomoea purpurea</name>
    <name type="common">Common morning glory</name>
    <name type="synonym">Pharbitis purpurea</name>
    <dbReference type="NCBI Taxonomy" id="4121"/>
    <lineage>
        <taxon>Eukaryota</taxon>
        <taxon>Viridiplantae</taxon>
        <taxon>Streptophyta</taxon>
        <taxon>Embryophyta</taxon>
        <taxon>Tracheophyta</taxon>
        <taxon>Spermatophyta</taxon>
        <taxon>Magnoliopsida</taxon>
        <taxon>eudicotyledons</taxon>
        <taxon>Gunneridae</taxon>
        <taxon>Pentapetalae</taxon>
        <taxon>asterids</taxon>
        <taxon>lamiids</taxon>
        <taxon>Solanales</taxon>
        <taxon>Convolvulaceae</taxon>
        <taxon>Ipomoeeae</taxon>
        <taxon>Ipomoea</taxon>
    </lineage>
</organism>
<keyword id="KW-0150">Chloroplast</keyword>
<keyword id="KW-0472">Membrane</keyword>
<keyword id="KW-0520">NAD</keyword>
<keyword id="KW-0521">NADP</keyword>
<keyword id="KW-0934">Plastid</keyword>
<keyword id="KW-0618">Plastoquinone</keyword>
<keyword id="KW-0874">Quinone</keyword>
<keyword id="KW-0793">Thylakoid</keyword>
<keyword id="KW-1278">Translocase</keyword>
<keyword id="KW-0812">Transmembrane</keyword>
<keyword id="KW-1133">Transmembrane helix</keyword>
<keyword id="KW-0813">Transport</keyword>